<reference key="1">
    <citation type="journal article" date="2000" name="Nature">
        <title>Sequence and analysis of chromosome 3 of the plant Arabidopsis thaliana.</title>
        <authorList>
            <person name="Salanoubat M."/>
            <person name="Lemcke K."/>
            <person name="Rieger M."/>
            <person name="Ansorge W."/>
            <person name="Unseld M."/>
            <person name="Fartmann B."/>
            <person name="Valle G."/>
            <person name="Bloecker H."/>
            <person name="Perez-Alonso M."/>
            <person name="Obermaier B."/>
            <person name="Delseny M."/>
            <person name="Boutry M."/>
            <person name="Grivell L.A."/>
            <person name="Mache R."/>
            <person name="Puigdomenech P."/>
            <person name="De Simone V."/>
            <person name="Choisne N."/>
            <person name="Artiguenave F."/>
            <person name="Robert C."/>
            <person name="Brottier P."/>
            <person name="Wincker P."/>
            <person name="Cattolico L."/>
            <person name="Weissenbach J."/>
            <person name="Saurin W."/>
            <person name="Quetier F."/>
            <person name="Schaefer M."/>
            <person name="Mueller-Auer S."/>
            <person name="Gabel C."/>
            <person name="Fuchs M."/>
            <person name="Benes V."/>
            <person name="Wurmbach E."/>
            <person name="Drzonek H."/>
            <person name="Erfle H."/>
            <person name="Jordan N."/>
            <person name="Bangert S."/>
            <person name="Wiedelmann R."/>
            <person name="Kranz H."/>
            <person name="Voss H."/>
            <person name="Holland R."/>
            <person name="Brandt P."/>
            <person name="Nyakatura G."/>
            <person name="Vezzi A."/>
            <person name="D'Angelo M."/>
            <person name="Pallavicini A."/>
            <person name="Toppo S."/>
            <person name="Simionati B."/>
            <person name="Conrad A."/>
            <person name="Hornischer K."/>
            <person name="Kauer G."/>
            <person name="Loehnert T.-H."/>
            <person name="Nordsiek G."/>
            <person name="Reichelt J."/>
            <person name="Scharfe M."/>
            <person name="Schoen O."/>
            <person name="Bargues M."/>
            <person name="Terol J."/>
            <person name="Climent J."/>
            <person name="Navarro P."/>
            <person name="Collado C."/>
            <person name="Perez-Perez A."/>
            <person name="Ottenwaelder B."/>
            <person name="Duchemin D."/>
            <person name="Cooke R."/>
            <person name="Laudie M."/>
            <person name="Berger-Llauro C."/>
            <person name="Purnelle B."/>
            <person name="Masuy D."/>
            <person name="de Haan M."/>
            <person name="Maarse A.C."/>
            <person name="Alcaraz J.-P."/>
            <person name="Cottet A."/>
            <person name="Casacuberta E."/>
            <person name="Monfort A."/>
            <person name="Argiriou A."/>
            <person name="Flores M."/>
            <person name="Liguori R."/>
            <person name="Vitale D."/>
            <person name="Mannhaupt G."/>
            <person name="Haase D."/>
            <person name="Schoof H."/>
            <person name="Rudd S."/>
            <person name="Zaccaria P."/>
            <person name="Mewes H.-W."/>
            <person name="Mayer K.F.X."/>
            <person name="Kaul S."/>
            <person name="Town C.D."/>
            <person name="Koo H.L."/>
            <person name="Tallon L.J."/>
            <person name="Jenkins J."/>
            <person name="Rooney T."/>
            <person name="Rizzo M."/>
            <person name="Walts A."/>
            <person name="Utterback T."/>
            <person name="Fujii C.Y."/>
            <person name="Shea T.P."/>
            <person name="Creasy T.H."/>
            <person name="Haas B."/>
            <person name="Maiti R."/>
            <person name="Wu D."/>
            <person name="Peterson J."/>
            <person name="Van Aken S."/>
            <person name="Pai G."/>
            <person name="Militscher J."/>
            <person name="Sellers P."/>
            <person name="Gill J.E."/>
            <person name="Feldblyum T.V."/>
            <person name="Preuss D."/>
            <person name="Lin X."/>
            <person name="Nierman W.C."/>
            <person name="Salzberg S.L."/>
            <person name="White O."/>
            <person name="Venter J.C."/>
            <person name="Fraser C.M."/>
            <person name="Kaneko T."/>
            <person name="Nakamura Y."/>
            <person name="Sato S."/>
            <person name="Kato T."/>
            <person name="Asamizu E."/>
            <person name="Sasamoto S."/>
            <person name="Kimura T."/>
            <person name="Idesawa K."/>
            <person name="Kawashima K."/>
            <person name="Kishida Y."/>
            <person name="Kiyokawa C."/>
            <person name="Kohara M."/>
            <person name="Matsumoto M."/>
            <person name="Matsuno A."/>
            <person name="Muraki A."/>
            <person name="Nakayama S."/>
            <person name="Nakazaki N."/>
            <person name="Shinpo S."/>
            <person name="Takeuchi C."/>
            <person name="Wada T."/>
            <person name="Watanabe A."/>
            <person name="Yamada M."/>
            <person name="Yasuda M."/>
            <person name="Tabata S."/>
        </authorList>
    </citation>
    <scope>NUCLEOTIDE SEQUENCE [LARGE SCALE GENOMIC DNA] (ISOFORM 2)</scope>
    <source>
        <strain>cv. Columbia</strain>
    </source>
</reference>
<reference key="2">
    <citation type="journal article" date="2017" name="Plant J.">
        <title>Araport11: a complete reannotation of the Arabidopsis thaliana reference genome.</title>
        <authorList>
            <person name="Cheng C.Y."/>
            <person name="Krishnakumar V."/>
            <person name="Chan A.P."/>
            <person name="Thibaud-Nissen F."/>
            <person name="Schobel S."/>
            <person name="Town C.D."/>
        </authorList>
    </citation>
    <scope>GENOME REANNOTATION</scope>
    <source>
        <strain>cv. Columbia</strain>
    </source>
</reference>
<reference key="3">
    <citation type="journal article" date="2015" name="Cell Host Microbe">
        <title>The decoy substrate of a pathogen effector and a pseudokinase specify pathogen-induced modified-self recognition and immunity in plants.</title>
        <authorList>
            <person name="Wang G."/>
            <person name="Roux B."/>
            <person name="Feng F."/>
            <person name="Guy E."/>
            <person name="Li L."/>
            <person name="Li N."/>
            <person name="Zhang X."/>
            <person name="Lautier M."/>
            <person name="Jardinaud M.-F."/>
            <person name="Chabannes M."/>
            <person name="Arlat M."/>
            <person name="Chen S."/>
            <person name="He C."/>
            <person name="Noel L.D."/>
            <person name="Zhou J.-M."/>
        </authorList>
    </citation>
    <scope>GENE FAMILY</scope>
    <scope>NOMENCLATURE</scope>
    <source>
        <strain>cv. Columbia</strain>
    </source>
</reference>
<dbReference type="EC" id="2.7.11.1" evidence="1"/>
<dbReference type="EMBL" id="AL049660">
    <property type="protein sequence ID" value="CAB41181.1"/>
    <property type="molecule type" value="Genomic_DNA"/>
</dbReference>
<dbReference type="EMBL" id="CP002686">
    <property type="protein sequence ID" value="AEE79692.1"/>
    <property type="molecule type" value="Genomic_DNA"/>
</dbReference>
<dbReference type="EMBL" id="CP002686">
    <property type="protein sequence ID" value="ANM63759.1"/>
    <property type="molecule type" value="Genomic_DNA"/>
</dbReference>
<dbReference type="PIR" id="T06746">
    <property type="entry name" value="T06746"/>
</dbReference>
<dbReference type="RefSeq" id="NP_001325830.1">
    <molecule id="A0A178VE74-1"/>
    <property type="nucleotide sequence ID" value="NM_001339884.1"/>
</dbReference>
<dbReference type="RefSeq" id="NP_191333.1">
    <molecule id="A0A178VE74-2"/>
    <property type="nucleotide sequence ID" value="NM_115634.2"/>
</dbReference>
<dbReference type="SMR" id="A0A178VE74"/>
<dbReference type="FunCoup" id="A0A178VE74">
    <property type="interactions" value="1"/>
</dbReference>
<dbReference type="PaxDb" id="3702-AT3G57740.1"/>
<dbReference type="EnsemblPlants" id="AT3G57740.1">
    <molecule id="A0A178VE74-2"/>
    <property type="protein sequence ID" value="AT3G57740.1"/>
    <property type="gene ID" value="AT3G57740"/>
</dbReference>
<dbReference type="EnsemblPlants" id="AT3G57740.2">
    <molecule id="A0A178VE74-1"/>
    <property type="protein sequence ID" value="AT3G57740.2"/>
    <property type="gene ID" value="AT3G57740"/>
</dbReference>
<dbReference type="GeneID" id="824943"/>
<dbReference type="Gramene" id="AT3G57740.1">
    <molecule id="A0A178VE74-2"/>
    <property type="protein sequence ID" value="AT3G57740.1"/>
    <property type="gene ID" value="AT3G57740"/>
</dbReference>
<dbReference type="Gramene" id="AT3G57740.2">
    <molecule id="A0A178VE74-1"/>
    <property type="protein sequence ID" value="AT3G57740.2"/>
    <property type="gene ID" value="AT3G57740"/>
</dbReference>
<dbReference type="KEGG" id="ath:AT3G57740"/>
<dbReference type="Araport" id="AT3G57740"/>
<dbReference type="TAIR" id="AT3G57740">
    <property type="gene designation" value="ZRK4"/>
</dbReference>
<dbReference type="eggNOG" id="KOG1187">
    <property type="taxonomic scope" value="Eukaryota"/>
</dbReference>
<dbReference type="HOGENOM" id="CLU_000288_21_4_1"/>
<dbReference type="InParanoid" id="A0A178VE74"/>
<dbReference type="PRO" id="PR:A0A178VE74"/>
<dbReference type="Proteomes" id="UP000006548">
    <property type="component" value="Chromosome 3"/>
</dbReference>
<dbReference type="ExpressionAtlas" id="A0A178VE74">
    <property type="expression patterns" value="baseline and differential"/>
</dbReference>
<dbReference type="GO" id="GO:0005829">
    <property type="term" value="C:cytosol"/>
    <property type="evidence" value="ECO:0007005"/>
    <property type="project" value="TAIR"/>
</dbReference>
<dbReference type="GO" id="GO:0005524">
    <property type="term" value="F:ATP binding"/>
    <property type="evidence" value="ECO:0007669"/>
    <property type="project" value="UniProtKB-KW"/>
</dbReference>
<dbReference type="GO" id="GO:0106310">
    <property type="term" value="F:protein serine kinase activity"/>
    <property type="evidence" value="ECO:0007669"/>
    <property type="project" value="RHEA"/>
</dbReference>
<dbReference type="GO" id="GO:0004674">
    <property type="term" value="F:protein serine/threonine kinase activity"/>
    <property type="evidence" value="ECO:0007669"/>
    <property type="project" value="UniProtKB-EC"/>
</dbReference>
<dbReference type="GO" id="GO:0007166">
    <property type="term" value="P:cell surface receptor signaling pathway"/>
    <property type="evidence" value="ECO:0007669"/>
    <property type="project" value="InterPro"/>
</dbReference>
<dbReference type="FunFam" id="3.30.200.20:FF:000515">
    <property type="entry name" value="Inactive serine/threonine-protein kinase"/>
    <property type="match status" value="1"/>
</dbReference>
<dbReference type="FunFam" id="1.10.510.10:FF:001251">
    <property type="entry name" value="Inactive serine/threonine-protein kinase At1g67470"/>
    <property type="match status" value="1"/>
</dbReference>
<dbReference type="Gene3D" id="3.30.200.20">
    <property type="entry name" value="Phosphorylase Kinase, domain 1"/>
    <property type="match status" value="1"/>
</dbReference>
<dbReference type="Gene3D" id="1.10.510.10">
    <property type="entry name" value="Transferase(Phosphotransferase) domain 1"/>
    <property type="match status" value="1"/>
</dbReference>
<dbReference type="InterPro" id="IPR011009">
    <property type="entry name" value="Kinase-like_dom_sf"/>
</dbReference>
<dbReference type="InterPro" id="IPR000719">
    <property type="entry name" value="Prot_kinase_dom"/>
</dbReference>
<dbReference type="InterPro" id="IPR001245">
    <property type="entry name" value="Ser-Thr/Tyr_kinase_cat_dom"/>
</dbReference>
<dbReference type="InterPro" id="IPR045274">
    <property type="entry name" value="WAK-like"/>
</dbReference>
<dbReference type="PANTHER" id="PTHR27005:SF266">
    <property type="entry name" value="SERINE_THREONINE-PROTEIN KINASE ZRK4"/>
    <property type="match status" value="1"/>
</dbReference>
<dbReference type="PANTHER" id="PTHR27005">
    <property type="entry name" value="WALL-ASSOCIATED RECEPTOR KINASE-LIKE 21"/>
    <property type="match status" value="1"/>
</dbReference>
<dbReference type="Pfam" id="PF07714">
    <property type="entry name" value="PK_Tyr_Ser-Thr"/>
    <property type="match status" value="1"/>
</dbReference>
<dbReference type="SUPFAM" id="SSF56112">
    <property type="entry name" value="Protein kinase-like (PK-like)"/>
    <property type="match status" value="1"/>
</dbReference>
<dbReference type="PROSITE" id="PS50011">
    <property type="entry name" value="PROTEIN_KINASE_DOM"/>
    <property type="match status" value="1"/>
</dbReference>
<sequence length="362" mass="42114">MNDQKMSCWRKKSKKKNSEANQRQRWFQENGKVLLEDLIELCNGKSNPIKTFSAEEILQATDNFSESNLVIRFNFMYRGILQNRPVLIKRATWNYYKSDTLEKICRDIAVSSMVSGHKNFLKLLGCCLEFEHPVLVCEYAERIPFNTPNPEMLLPWRMRIKIAKEIAIAVSYLHTALSRTMIHTDIQPFNIFVDSNGTAKLSDFCLCIAIPEGETFVKVHADRVEGTLDYLEYNYAATGLITEYTDVFSFGVLLQNFFTRTYGVVDCCCSEDESLFEEFEDKQNVMNLRISDRISKFVEEGRIFDMLDPKMLESMGDDETEEHKIRRMKAVLMLSLRCTGHRGDVPKMMEVAKELKRIERWT</sequence>
<organism>
    <name type="scientific">Arabidopsis thaliana</name>
    <name type="common">Mouse-ear cress</name>
    <dbReference type="NCBI Taxonomy" id="3702"/>
    <lineage>
        <taxon>Eukaryota</taxon>
        <taxon>Viridiplantae</taxon>
        <taxon>Streptophyta</taxon>
        <taxon>Embryophyta</taxon>
        <taxon>Tracheophyta</taxon>
        <taxon>Spermatophyta</taxon>
        <taxon>Magnoliopsida</taxon>
        <taxon>eudicotyledons</taxon>
        <taxon>Gunneridae</taxon>
        <taxon>Pentapetalae</taxon>
        <taxon>rosids</taxon>
        <taxon>malvids</taxon>
        <taxon>Brassicales</taxon>
        <taxon>Brassicaceae</taxon>
        <taxon>Camelineae</taxon>
        <taxon>Arabidopsis</taxon>
    </lineage>
</organism>
<name>ZRK4_ARATH</name>
<proteinExistence type="inferred from homology"/>
<accession>A0A178VE74</accession>
<accession>A0A1I9LMF1</accession>
<accession>Q9SVY8</accession>
<gene>
    <name evidence="3" type="primary">ZRK4</name>
    <name evidence="5" type="ordered locus">At3g57740</name>
    <name evidence="6" type="ORF">F15B8.70</name>
</gene>
<protein>
    <recommendedName>
        <fullName evidence="3">Serine/threonine-protein kinase ZRK4</fullName>
        <ecNumber evidence="1">2.7.11.1</ecNumber>
    </recommendedName>
</protein>
<comment type="catalytic activity">
    <reaction evidence="1">
        <text>L-seryl-[protein] + ATP = O-phospho-L-seryl-[protein] + ADP + H(+)</text>
        <dbReference type="Rhea" id="RHEA:17989"/>
        <dbReference type="Rhea" id="RHEA-COMP:9863"/>
        <dbReference type="Rhea" id="RHEA-COMP:11604"/>
        <dbReference type="ChEBI" id="CHEBI:15378"/>
        <dbReference type="ChEBI" id="CHEBI:29999"/>
        <dbReference type="ChEBI" id="CHEBI:30616"/>
        <dbReference type="ChEBI" id="CHEBI:83421"/>
        <dbReference type="ChEBI" id="CHEBI:456216"/>
        <dbReference type="EC" id="2.7.11.1"/>
    </reaction>
</comment>
<comment type="catalytic activity">
    <reaction evidence="1">
        <text>L-threonyl-[protein] + ATP = O-phospho-L-threonyl-[protein] + ADP + H(+)</text>
        <dbReference type="Rhea" id="RHEA:46608"/>
        <dbReference type="Rhea" id="RHEA-COMP:11060"/>
        <dbReference type="Rhea" id="RHEA-COMP:11605"/>
        <dbReference type="ChEBI" id="CHEBI:15378"/>
        <dbReference type="ChEBI" id="CHEBI:30013"/>
        <dbReference type="ChEBI" id="CHEBI:30616"/>
        <dbReference type="ChEBI" id="CHEBI:61977"/>
        <dbReference type="ChEBI" id="CHEBI:456216"/>
        <dbReference type="EC" id="2.7.11.1"/>
    </reaction>
</comment>
<comment type="alternative products">
    <event type="alternative splicing"/>
    <isoform>
        <id>A0A178VE74-1</id>
        <name>1</name>
        <sequence type="displayed"/>
    </isoform>
    <isoform>
        <id>A0A178VE74-2</id>
        <name>2</name>
        <sequence type="described" ref="VSP_060565"/>
    </isoform>
</comment>
<comment type="similarity">
    <text evidence="4">Belongs to the protein kinase superfamily. Ser/Thr protein kinase family. ZRK subfamily.</text>
</comment>
<keyword id="KW-0025">Alternative splicing</keyword>
<keyword id="KW-0067">ATP-binding</keyword>
<keyword id="KW-0418">Kinase</keyword>
<keyword id="KW-0547">Nucleotide-binding</keyword>
<keyword id="KW-1185">Reference proteome</keyword>
<keyword id="KW-0808">Transferase</keyword>
<evidence type="ECO:0000255" key="1">
    <source>
        <dbReference type="PROSITE-ProRule" id="PRU00159"/>
    </source>
</evidence>
<evidence type="ECO:0000256" key="2">
    <source>
        <dbReference type="SAM" id="MobiDB-lite"/>
    </source>
</evidence>
<evidence type="ECO:0000303" key="3">
    <source>
    </source>
</evidence>
<evidence type="ECO:0000305" key="4"/>
<evidence type="ECO:0000312" key="5">
    <source>
        <dbReference type="Araport" id="AT3G57740"/>
    </source>
</evidence>
<evidence type="ECO:0000312" key="6">
    <source>
        <dbReference type="EMBL" id="CAB41181.1"/>
    </source>
</evidence>
<feature type="chain" id="PRO_0000449492" description="Serine/threonine-protein kinase ZRK4">
    <location>
        <begin position="1"/>
        <end position="362"/>
    </location>
</feature>
<feature type="domain" description="Protein kinase" evidence="1">
    <location>
        <begin position="35"/>
        <end position="362"/>
    </location>
</feature>
<feature type="region of interest" description="Disordered" evidence="2">
    <location>
        <begin position="1"/>
        <end position="23"/>
    </location>
</feature>
<feature type="active site" description="Proton acceptor" evidence="1">
    <location>
        <position position="185"/>
    </location>
</feature>
<feature type="binding site" evidence="1">
    <location>
        <begin position="41"/>
        <end position="49"/>
    </location>
    <ligand>
        <name>ATP</name>
        <dbReference type="ChEBI" id="CHEBI:30616"/>
    </ligand>
</feature>
<feature type="binding site" evidence="1">
    <location>
        <position position="89"/>
    </location>
    <ligand>
        <name>ATP</name>
        <dbReference type="ChEBI" id="CHEBI:30616"/>
    </ligand>
</feature>
<feature type="splice variant" id="VSP_060565" description="In isoform 2.">
    <location>
        <begin position="1"/>
        <end position="5"/>
    </location>
</feature>